<feature type="chain" id="PRO_0000163216" description="RNA-binding protein KhpA">
    <location>
        <begin position="1"/>
        <end position="81"/>
    </location>
</feature>
<feature type="domain" description="KH" evidence="1">
    <location>
        <begin position="34"/>
        <end position="81"/>
    </location>
</feature>
<protein>
    <recommendedName>
        <fullName evidence="1">RNA-binding protein KhpA</fullName>
    </recommendedName>
    <alternativeName>
        <fullName evidence="1">KH-domain protein A</fullName>
    </alternativeName>
</protein>
<organism>
    <name type="scientific">Bacillus subtilis (strain 168)</name>
    <dbReference type="NCBI Taxonomy" id="224308"/>
    <lineage>
        <taxon>Bacteria</taxon>
        <taxon>Bacillati</taxon>
        <taxon>Bacillota</taxon>
        <taxon>Bacilli</taxon>
        <taxon>Bacillales</taxon>
        <taxon>Bacillaceae</taxon>
        <taxon>Bacillus</taxon>
    </lineage>
</organism>
<gene>
    <name evidence="1" type="primary">khpA</name>
    <name type="synonym">ylqC</name>
    <name type="ordered locus">BSU16000</name>
</gene>
<accession>O31738</accession>
<comment type="function">
    <text evidence="1">A probable RNA chaperone. Forms a complex with KhpB which binds to cellular RNA and controls its expression. Plays a role in peptidoglycan (PG) homeostasis and cell length regulation.</text>
</comment>
<comment type="subunit">
    <text evidence="1">Forms a complex with KhpB.</text>
</comment>
<comment type="subcellular location">
    <subcellularLocation>
        <location evidence="1">Cytoplasm</location>
    </subcellularLocation>
</comment>
<comment type="similarity">
    <text evidence="1">Belongs to the KhpA RNA-binding protein family.</text>
</comment>
<proteinExistence type="inferred from homology"/>
<name>KHPA_BACSU</name>
<sequence>MTDQHLEDLIVHIVTPLVDHPDDIRVIREETDQKIALRLSVHKSDTGKVIGKQGRTAKAIRTAVFAAGVQSSKKVQFEIFD</sequence>
<dbReference type="EMBL" id="AL009126">
    <property type="protein sequence ID" value="CAB13473.1"/>
    <property type="molecule type" value="Genomic_DNA"/>
</dbReference>
<dbReference type="PIR" id="C69880">
    <property type="entry name" value="C69880"/>
</dbReference>
<dbReference type="RefSeq" id="NP_389482.1">
    <property type="nucleotide sequence ID" value="NC_000964.3"/>
</dbReference>
<dbReference type="RefSeq" id="WP_003232017.1">
    <property type="nucleotide sequence ID" value="NZ_OZ025638.1"/>
</dbReference>
<dbReference type="SMR" id="O31738"/>
<dbReference type="FunCoup" id="O31738">
    <property type="interactions" value="299"/>
</dbReference>
<dbReference type="STRING" id="224308.BSU16000"/>
<dbReference type="PaxDb" id="224308-BSU16000"/>
<dbReference type="EnsemblBacteria" id="CAB13473">
    <property type="protein sequence ID" value="CAB13473"/>
    <property type="gene ID" value="BSU_16000"/>
</dbReference>
<dbReference type="GeneID" id="936821"/>
<dbReference type="KEGG" id="bsu:BSU16000"/>
<dbReference type="PATRIC" id="fig|224308.179.peg.1740"/>
<dbReference type="eggNOG" id="COG1837">
    <property type="taxonomic scope" value="Bacteria"/>
</dbReference>
<dbReference type="InParanoid" id="O31738"/>
<dbReference type="OrthoDB" id="9812389at2"/>
<dbReference type="PhylomeDB" id="O31738"/>
<dbReference type="BioCyc" id="BSUB:BSU16000-MONOMER"/>
<dbReference type="Proteomes" id="UP000001570">
    <property type="component" value="Chromosome"/>
</dbReference>
<dbReference type="GO" id="GO:0005737">
    <property type="term" value="C:cytoplasm"/>
    <property type="evidence" value="ECO:0007669"/>
    <property type="project" value="UniProtKB-SubCell"/>
</dbReference>
<dbReference type="GO" id="GO:0003723">
    <property type="term" value="F:RNA binding"/>
    <property type="evidence" value="ECO:0007669"/>
    <property type="project" value="UniProtKB-UniRule"/>
</dbReference>
<dbReference type="GO" id="GO:0071555">
    <property type="term" value="P:cell wall organization"/>
    <property type="evidence" value="ECO:0007669"/>
    <property type="project" value="UniProtKB-KW"/>
</dbReference>
<dbReference type="GO" id="GO:0009252">
    <property type="term" value="P:peptidoglycan biosynthetic process"/>
    <property type="evidence" value="ECO:0007669"/>
    <property type="project" value="UniProtKB-UniRule"/>
</dbReference>
<dbReference type="GO" id="GO:0008360">
    <property type="term" value="P:regulation of cell shape"/>
    <property type="evidence" value="ECO:0007669"/>
    <property type="project" value="UniProtKB-KW"/>
</dbReference>
<dbReference type="CDD" id="cd22533">
    <property type="entry name" value="KH-II_YlqC-like"/>
    <property type="match status" value="1"/>
</dbReference>
<dbReference type="Gene3D" id="3.30.300.20">
    <property type="match status" value="1"/>
</dbReference>
<dbReference type="HAMAP" id="MF_00088">
    <property type="entry name" value="KhpA"/>
    <property type="match status" value="1"/>
</dbReference>
<dbReference type="InterPro" id="IPR015946">
    <property type="entry name" value="KH_dom-like_a/b"/>
</dbReference>
<dbReference type="InterPro" id="IPR009019">
    <property type="entry name" value="KH_sf_prok-type"/>
</dbReference>
<dbReference type="InterPro" id="IPR020627">
    <property type="entry name" value="KhpA"/>
</dbReference>
<dbReference type="PANTHER" id="PTHR34654:SF1">
    <property type="entry name" value="RNA-BINDING PROTEIN KHPA"/>
    <property type="match status" value="1"/>
</dbReference>
<dbReference type="PANTHER" id="PTHR34654">
    <property type="entry name" value="UPF0109 PROTEIN SCO5592"/>
    <property type="match status" value="1"/>
</dbReference>
<dbReference type="Pfam" id="PF13083">
    <property type="entry name" value="KH_KhpA-B"/>
    <property type="match status" value="1"/>
</dbReference>
<dbReference type="SUPFAM" id="SSF54814">
    <property type="entry name" value="Prokaryotic type KH domain (KH-domain type II)"/>
    <property type="match status" value="1"/>
</dbReference>
<reference key="1">
    <citation type="journal article" date="1997" name="Nature">
        <title>The complete genome sequence of the Gram-positive bacterium Bacillus subtilis.</title>
        <authorList>
            <person name="Kunst F."/>
            <person name="Ogasawara N."/>
            <person name="Moszer I."/>
            <person name="Albertini A.M."/>
            <person name="Alloni G."/>
            <person name="Azevedo V."/>
            <person name="Bertero M.G."/>
            <person name="Bessieres P."/>
            <person name="Bolotin A."/>
            <person name="Borchert S."/>
            <person name="Borriss R."/>
            <person name="Boursier L."/>
            <person name="Brans A."/>
            <person name="Braun M."/>
            <person name="Brignell S.C."/>
            <person name="Bron S."/>
            <person name="Brouillet S."/>
            <person name="Bruschi C.V."/>
            <person name="Caldwell B."/>
            <person name="Capuano V."/>
            <person name="Carter N.M."/>
            <person name="Choi S.-K."/>
            <person name="Codani J.-J."/>
            <person name="Connerton I.F."/>
            <person name="Cummings N.J."/>
            <person name="Daniel R.A."/>
            <person name="Denizot F."/>
            <person name="Devine K.M."/>
            <person name="Duesterhoeft A."/>
            <person name="Ehrlich S.D."/>
            <person name="Emmerson P.T."/>
            <person name="Entian K.-D."/>
            <person name="Errington J."/>
            <person name="Fabret C."/>
            <person name="Ferrari E."/>
            <person name="Foulger D."/>
            <person name="Fritz C."/>
            <person name="Fujita M."/>
            <person name="Fujita Y."/>
            <person name="Fuma S."/>
            <person name="Galizzi A."/>
            <person name="Galleron N."/>
            <person name="Ghim S.-Y."/>
            <person name="Glaser P."/>
            <person name="Goffeau A."/>
            <person name="Golightly E.J."/>
            <person name="Grandi G."/>
            <person name="Guiseppi G."/>
            <person name="Guy B.J."/>
            <person name="Haga K."/>
            <person name="Haiech J."/>
            <person name="Harwood C.R."/>
            <person name="Henaut A."/>
            <person name="Hilbert H."/>
            <person name="Holsappel S."/>
            <person name="Hosono S."/>
            <person name="Hullo M.-F."/>
            <person name="Itaya M."/>
            <person name="Jones L.-M."/>
            <person name="Joris B."/>
            <person name="Karamata D."/>
            <person name="Kasahara Y."/>
            <person name="Klaerr-Blanchard M."/>
            <person name="Klein C."/>
            <person name="Kobayashi Y."/>
            <person name="Koetter P."/>
            <person name="Koningstein G."/>
            <person name="Krogh S."/>
            <person name="Kumano M."/>
            <person name="Kurita K."/>
            <person name="Lapidus A."/>
            <person name="Lardinois S."/>
            <person name="Lauber J."/>
            <person name="Lazarevic V."/>
            <person name="Lee S.-M."/>
            <person name="Levine A."/>
            <person name="Liu H."/>
            <person name="Masuda S."/>
            <person name="Mauel C."/>
            <person name="Medigue C."/>
            <person name="Medina N."/>
            <person name="Mellado R.P."/>
            <person name="Mizuno M."/>
            <person name="Moestl D."/>
            <person name="Nakai S."/>
            <person name="Noback M."/>
            <person name="Noone D."/>
            <person name="O'Reilly M."/>
            <person name="Ogawa K."/>
            <person name="Ogiwara A."/>
            <person name="Oudega B."/>
            <person name="Park S.-H."/>
            <person name="Parro V."/>
            <person name="Pohl T.M."/>
            <person name="Portetelle D."/>
            <person name="Porwollik S."/>
            <person name="Prescott A.M."/>
            <person name="Presecan E."/>
            <person name="Pujic P."/>
            <person name="Purnelle B."/>
            <person name="Rapoport G."/>
            <person name="Rey M."/>
            <person name="Reynolds S."/>
            <person name="Rieger M."/>
            <person name="Rivolta C."/>
            <person name="Rocha E."/>
            <person name="Roche B."/>
            <person name="Rose M."/>
            <person name="Sadaie Y."/>
            <person name="Sato T."/>
            <person name="Scanlan E."/>
            <person name="Schleich S."/>
            <person name="Schroeter R."/>
            <person name="Scoffone F."/>
            <person name="Sekiguchi J."/>
            <person name="Sekowska A."/>
            <person name="Seror S.J."/>
            <person name="Serror P."/>
            <person name="Shin B.-S."/>
            <person name="Soldo B."/>
            <person name="Sorokin A."/>
            <person name="Tacconi E."/>
            <person name="Takagi T."/>
            <person name="Takahashi H."/>
            <person name="Takemaru K."/>
            <person name="Takeuchi M."/>
            <person name="Tamakoshi A."/>
            <person name="Tanaka T."/>
            <person name="Terpstra P."/>
            <person name="Tognoni A."/>
            <person name="Tosato V."/>
            <person name="Uchiyama S."/>
            <person name="Vandenbol M."/>
            <person name="Vannier F."/>
            <person name="Vassarotti A."/>
            <person name="Viari A."/>
            <person name="Wambutt R."/>
            <person name="Wedler E."/>
            <person name="Wedler H."/>
            <person name="Weitzenegger T."/>
            <person name="Winters P."/>
            <person name="Wipat A."/>
            <person name="Yamamoto H."/>
            <person name="Yamane K."/>
            <person name="Yasumoto K."/>
            <person name="Yata K."/>
            <person name="Yoshida K."/>
            <person name="Yoshikawa H.-F."/>
            <person name="Zumstein E."/>
            <person name="Yoshikawa H."/>
            <person name="Danchin A."/>
        </authorList>
    </citation>
    <scope>NUCLEOTIDE SEQUENCE [LARGE SCALE GENOMIC DNA]</scope>
    <source>
        <strain>168</strain>
    </source>
</reference>
<evidence type="ECO:0000255" key="1">
    <source>
        <dbReference type="HAMAP-Rule" id="MF_00088"/>
    </source>
</evidence>
<keyword id="KW-0133">Cell shape</keyword>
<keyword id="KW-0961">Cell wall biogenesis/degradation</keyword>
<keyword id="KW-0143">Chaperone</keyword>
<keyword id="KW-0963">Cytoplasm</keyword>
<keyword id="KW-1185">Reference proteome</keyword>
<keyword id="KW-0694">RNA-binding</keyword>